<reference key="1">
    <citation type="journal article" date="2006" name="Proc. Natl. Acad. Sci. U.S.A.">
        <title>Comparative genomics of the lactic acid bacteria.</title>
        <authorList>
            <person name="Makarova K.S."/>
            <person name="Slesarev A."/>
            <person name="Wolf Y.I."/>
            <person name="Sorokin A."/>
            <person name="Mirkin B."/>
            <person name="Koonin E.V."/>
            <person name="Pavlov A."/>
            <person name="Pavlova N."/>
            <person name="Karamychev V."/>
            <person name="Polouchine N."/>
            <person name="Shakhova V."/>
            <person name="Grigoriev I."/>
            <person name="Lou Y."/>
            <person name="Rohksar D."/>
            <person name="Lucas S."/>
            <person name="Huang K."/>
            <person name="Goodstein D.M."/>
            <person name="Hawkins T."/>
            <person name="Plengvidhya V."/>
            <person name="Welker D."/>
            <person name="Hughes J."/>
            <person name="Goh Y."/>
            <person name="Benson A."/>
            <person name="Baldwin K."/>
            <person name="Lee J.-H."/>
            <person name="Diaz-Muniz I."/>
            <person name="Dosti B."/>
            <person name="Smeianov V."/>
            <person name="Wechter W."/>
            <person name="Barabote R."/>
            <person name="Lorca G."/>
            <person name="Altermann E."/>
            <person name="Barrangou R."/>
            <person name="Ganesan B."/>
            <person name="Xie Y."/>
            <person name="Rawsthorne H."/>
            <person name="Tamir D."/>
            <person name="Parker C."/>
            <person name="Breidt F."/>
            <person name="Broadbent J.R."/>
            <person name="Hutkins R."/>
            <person name="O'Sullivan D."/>
            <person name="Steele J."/>
            <person name="Unlu G."/>
            <person name="Saier M.H. Jr."/>
            <person name="Klaenhammer T."/>
            <person name="Richardson P."/>
            <person name="Kozyavkin S."/>
            <person name="Weimer B.C."/>
            <person name="Mills D.A."/>
        </authorList>
    </citation>
    <scope>NUCLEOTIDE SEQUENCE [LARGE SCALE GENOMIC DNA]</scope>
    <source>
        <strain>ATCC 33323 / DSM 20243 / BCRC 14619 / CIP 102991 / JCM 1131 / KCTC 3163 / NCIMB 11718 / NCTC 13722 / AM63</strain>
    </source>
</reference>
<organism>
    <name type="scientific">Lactobacillus gasseri (strain ATCC 33323 / DSM 20243 / BCRC 14619 / CIP 102991 / JCM 1131 / KCTC 3163 / NCIMB 11718 / NCTC 13722 / AM63)</name>
    <dbReference type="NCBI Taxonomy" id="324831"/>
    <lineage>
        <taxon>Bacteria</taxon>
        <taxon>Bacillati</taxon>
        <taxon>Bacillota</taxon>
        <taxon>Bacilli</taxon>
        <taxon>Lactobacillales</taxon>
        <taxon>Lactobacillaceae</taxon>
        <taxon>Lactobacillus</taxon>
    </lineage>
</organism>
<keyword id="KW-0687">Ribonucleoprotein</keyword>
<keyword id="KW-0689">Ribosomal protein</keyword>
<keyword id="KW-0694">RNA-binding</keyword>
<keyword id="KW-0699">rRNA-binding</keyword>
<proteinExistence type="inferred from homology"/>
<dbReference type="EMBL" id="CP000413">
    <property type="protein sequence ID" value="ABJ59698.1"/>
    <property type="molecule type" value="Genomic_DNA"/>
</dbReference>
<dbReference type="RefSeq" id="WP_003647834.1">
    <property type="nucleotide sequence ID" value="NZ_WBMG01000001.1"/>
</dbReference>
<dbReference type="SMR" id="Q046C4"/>
<dbReference type="GeneID" id="48924303"/>
<dbReference type="KEGG" id="lga:LGAS_0292"/>
<dbReference type="HOGENOM" id="CLU_041575_5_2_9"/>
<dbReference type="BioCyc" id="LGAS324831:G1G6Y-290-MONOMER"/>
<dbReference type="Proteomes" id="UP000000664">
    <property type="component" value="Chromosome"/>
</dbReference>
<dbReference type="GO" id="GO:1990904">
    <property type="term" value="C:ribonucleoprotein complex"/>
    <property type="evidence" value="ECO:0007669"/>
    <property type="project" value="UniProtKB-KW"/>
</dbReference>
<dbReference type="GO" id="GO:0005840">
    <property type="term" value="C:ribosome"/>
    <property type="evidence" value="ECO:0007669"/>
    <property type="project" value="UniProtKB-KW"/>
</dbReference>
<dbReference type="GO" id="GO:0019843">
    <property type="term" value="F:rRNA binding"/>
    <property type="evidence" value="ECO:0007669"/>
    <property type="project" value="UniProtKB-UniRule"/>
</dbReference>
<dbReference type="GO" id="GO:0003735">
    <property type="term" value="F:structural constituent of ribosome"/>
    <property type="evidence" value="ECO:0007669"/>
    <property type="project" value="InterPro"/>
</dbReference>
<dbReference type="GO" id="GO:0006412">
    <property type="term" value="P:translation"/>
    <property type="evidence" value="ECO:0007669"/>
    <property type="project" value="UniProtKB-UniRule"/>
</dbReference>
<dbReference type="Gene3D" id="3.40.1370.10">
    <property type="match status" value="1"/>
</dbReference>
<dbReference type="HAMAP" id="MF_01328_B">
    <property type="entry name" value="Ribosomal_uL4_B"/>
    <property type="match status" value="1"/>
</dbReference>
<dbReference type="InterPro" id="IPR002136">
    <property type="entry name" value="Ribosomal_uL4"/>
</dbReference>
<dbReference type="InterPro" id="IPR013005">
    <property type="entry name" value="Ribosomal_uL4-like"/>
</dbReference>
<dbReference type="InterPro" id="IPR023574">
    <property type="entry name" value="Ribosomal_uL4_dom_sf"/>
</dbReference>
<dbReference type="NCBIfam" id="TIGR03953">
    <property type="entry name" value="rplD_bact"/>
    <property type="match status" value="1"/>
</dbReference>
<dbReference type="PANTHER" id="PTHR10746">
    <property type="entry name" value="50S RIBOSOMAL PROTEIN L4"/>
    <property type="match status" value="1"/>
</dbReference>
<dbReference type="PANTHER" id="PTHR10746:SF6">
    <property type="entry name" value="LARGE RIBOSOMAL SUBUNIT PROTEIN UL4M"/>
    <property type="match status" value="1"/>
</dbReference>
<dbReference type="Pfam" id="PF00573">
    <property type="entry name" value="Ribosomal_L4"/>
    <property type="match status" value="1"/>
</dbReference>
<dbReference type="SUPFAM" id="SSF52166">
    <property type="entry name" value="Ribosomal protein L4"/>
    <property type="match status" value="1"/>
</dbReference>
<gene>
    <name evidence="1" type="primary">rplD</name>
    <name type="ordered locus">LGAS_0292</name>
</gene>
<comment type="function">
    <text evidence="1">One of the primary rRNA binding proteins, this protein initially binds near the 5'-end of the 23S rRNA. It is important during the early stages of 50S assembly. It makes multiple contacts with different domains of the 23S rRNA in the assembled 50S subunit and ribosome.</text>
</comment>
<comment type="function">
    <text evidence="1">Forms part of the polypeptide exit tunnel.</text>
</comment>
<comment type="subunit">
    <text evidence="1">Part of the 50S ribosomal subunit.</text>
</comment>
<comment type="similarity">
    <text evidence="1">Belongs to the universal ribosomal protein uL4 family.</text>
</comment>
<feature type="chain" id="PRO_1000052424" description="Large ribosomal subunit protein uL4">
    <location>
        <begin position="1"/>
        <end position="205"/>
    </location>
</feature>
<feature type="region of interest" description="Disordered" evidence="2">
    <location>
        <begin position="45"/>
        <end position="97"/>
    </location>
</feature>
<feature type="compositionally biased region" description="Basic residues" evidence="2">
    <location>
        <begin position="60"/>
        <end position="71"/>
    </location>
</feature>
<protein>
    <recommendedName>
        <fullName evidence="1">Large ribosomal subunit protein uL4</fullName>
    </recommendedName>
    <alternativeName>
        <fullName evidence="3">50S ribosomal protein L4</fullName>
    </alternativeName>
</protein>
<name>RL4_LACGA</name>
<sequence>MANLEIIDQKGKSAGNVDLNEEIFGIEPNESVVFDAIIRQRAGKRQGTSAVKNRSAVRGGGKKPWRQKGTGRARQGSIRAPQWRGGGTVFGPTPRSYKMDMPRKARRLAMKSVLSQKVADKDLIILDQLTLEAPKTKELKAILDNANVSGKVLVVSDDKNVQLSGKNLPKVKVVPVNGLNVVDAVDYQKLVLTQDAIKRIEEVLA</sequence>
<accession>Q046C4</accession>
<evidence type="ECO:0000255" key="1">
    <source>
        <dbReference type="HAMAP-Rule" id="MF_01328"/>
    </source>
</evidence>
<evidence type="ECO:0000256" key="2">
    <source>
        <dbReference type="SAM" id="MobiDB-lite"/>
    </source>
</evidence>
<evidence type="ECO:0000305" key="3"/>